<reference key="1">
    <citation type="journal article" date="2002" name="J. Bacteriol.">
        <title>Whole-genome comparison of Mycobacterium tuberculosis clinical and laboratory strains.</title>
        <authorList>
            <person name="Fleischmann R.D."/>
            <person name="Alland D."/>
            <person name="Eisen J.A."/>
            <person name="Carpenter L."/>
            <person name="White O."/>
            <person name="Peterson J.D."/>
            <person name="DeBoy R.T."/>
            <person name="Dodson R.J."/>
            <person name="Gwinn M.L."/>
            <person name="Haft D.H."/>
            <person name="Hickey E.K."/>
            <person name="Kolonay J.F."/>
            <person name="Nelson W.C."/>
            <person name="Umayam L.A."/>
            <person name="Ermolaeva M.D."/>
            <person name="Salzberg S.L."/>
            <person name="Delcher A."/>
            <person name="Utterback T.R."/>
            <person name="Weidman J.F."/>
            <person name="Khouri H.M."/>
            <person name="Gill J."/>
            <person name="Mikula A."/>
            <person name="Bishai W."/>
            <person name="Jacobs W.R. Jr."/>
            <person name="Venter J.C."/>
            <person name="Fraser C.M."/>
        </authorList>
    </citation>
    <scope>NUCLEOTIDE SEQUENCE [LARGE SCALE GENOMIC DNA]</scope>
    <source>
        <strain>CDC 1551 / Oshkosh</strain>
    </source>
</reference>
<name>TRHBN_MYCTO</name>
<accession>P9WN24</accession>
<accession>L0T6Z0</accession>
<accession>P0A592</accession>
<accession>Q10784</accession>
<dbReference type="EMBL" id="AE000516">
    <property type="protein sequence ID" value="AAK45860.1"/>
    <property type="molecule type" value="Genomic_DNA"/>
</dbReference>
<dbReference type="PIR" id="C70761">
    <property type="entry name" value="C70761"/>
</dbReference>
<dbReference type="RefSeq" id="WP_003407730.1">
    <property type="nucleotide sequence ID" value="NZ_KK341227.1"/>
</dbReference>
<dbReference type="BMRB" id="P9WN24"/>
<dbReference type="SMR" id="P9WN24"/>
<dbReference type="GeneID" id="45425525"/>
<dbReference type="KEGG" id="mtc:MT1594"/>
<dbReference type="PATRIC" id="fig|83331.31.peg.1715"/>
<dbReference type="HOGENOM" id="CLU_103526_2_1_11"/>
<dbReference type="Proteomes" id="UP000001020">
    <property type="component" value="Chromosome"/>
</dbReference>
<dbReference type="GO" id="GO:0020037">
    <property type="term" value="F:heme binding"/>
    <property type="evidence" value="ECO:0007669"/>
    <property type="project" value="InterPro"/>
</dbReference>
<dbReference type="GO" id="GO:0046872">
    <property type="term" value="F:metal ion binding"/>
    <property type="evidence" value="ECO:0007669"/>
    <property type="project" value="UniProtKB-KW"/>
</dbReference>
<dbReference type="GO" id="GO:0019825">
    <property type="term" value="F:oxygen binding"/>
    <property type="evidence" value="ECO:0007669"/>
    <property type="project" value="InterPro"/>
</dbReference>
<dbReference type="GO" id="GO:0005344">
    <property type="term" value="F:oxygen carrier activity"/>
    <property type="evidence" value="ECO:0007669"/>
    <property type="project" value="UniProtKB-KW"/>
</dbReference>
<dbReference type="CDD" id="cd14756">
    <property type="entry name" value="TrHb"/>
    <property type="match status" value="1"/>
</dbReference>
<dbReference type="FunFam" id="1.10.490.10:FF:000010">
    <property type="entry name" value="Group 1 truncated hemoglobin"/>
    <property type="match status" value="1"/>
</dbReference>
<dbReference type="Gene3D" id="1.10.490.10">
    <property type="entry name" value="Globins"/>
    <property type="match status" value="1"/>
</dbReference>
<dbReference type="InterPro" id="IPR009050">
    <property type="entry name" value="Globin-like_sf"/>
</dbReference>
<dbReference type="InterPro" id="IPR012292">
    <property type="entry name" value="Globin/Proto"/>
</dbReference>
<dbReference type="InterPro" id="IPR019795">
    <property type="entry name" value="Globin_bac-like_CS"/>
</dbReference>
<dbReference type="InterPro" id="IPR001486">
    <property type="entry name" value="Hemoglobin_trunc"/>
</dbReference>
<dbReference type="InterPro" id="IPR016339">
    <property type="entry name" value="Hemoglobin_trunc_I"/>
</dbReference>
<dbReference type="Pfam" id="PF01152">
    <property type="entry name" value="Bac_globin"/>
    <property type="match status" value="1"/>
</dbReference>
<dbReference type="PIRSF" id="PIRSF002030">
    <property type="entry name" value="Globin_Protozoa/Cyanobacteria"/>
    <property type="match status" value="1"/>
</dbReference>
<dbReference type="SUPFAM" id="SSF46458">
    <property type="entry name" value="Globin-like"/>
    <property type="match status" value="1"/>
</dbReference>
<dbReference type="PROSITE" id="PS01213">
    <property type="entry name" value="GLOBIN_FAM_2"/>
    <property type="match status" value="1"/>
</dbReference>
<proteinExistence type="inferred from homology"/>
<feature type="chain" id="PRO_0000427201" description="Group 1 truncated hemoglobin GlbN">
    <location>
        <begin position="1"/>
        <end position="136"/>
    </location>
</feature>
<feature type="binding site" description="proximal binding residue">
    <location>
        <position position="81"/>
    </location>
    <ligand>
        <name>heme</name>
        <dbReference type="ChEBI" id="CHEBI:30413"/>
    </ligand>
    <ligandPart>
        <name>Fe</name>
        <dbReference type="ChEBI" id="CHEBI:18248"/>
    </ligandPart>
</feature>
<gene>
    <name type="primary">glbN</name>
    <name type="ordered locus">MT1594</name>
</gene>
<sequence>MGLLSRLRKREPISIYDKIGGHEAIEVVVEDFYVRVLADDQLSAFFSGTNMSRLKGKQVEFFAAALGGPEPYTGAPMKQVHQGRGITMHHFSLVAGHLADALTAAGVPSETITEILGVIAPLAVDVTSGESTTAPV</sequence>
<comment type="function">
    <text evidence="1">Binds oxygen cooperatively with very high affinity.</text>
</comment>
<comment type="cofactor">
    <cofactor evidence="1">
        <name>heme</name>
        <dbReference type="ChEBI" id="CHEBI:30413"/>
    </cofactor>
    <text evidence="1">Binds 1 heme group per subunit.</text>
</comment>
<comment type="subunit">
    <text evidence="1">Homodimer.</text>
</comment>
<comment type="similarity">
    <text evidence="2">Belongs to the truncated hemoglobin family. Group I subfamily.</text>
</comment>
<evidence type="ECO:0000250" key="1"/>
<evidence type="ECO:0000305" key="2"/>
<keyword id="KW-0349">Heme</keyword>
<keyword id="KW-0408">Iron</keyword>
<keyword id="KW-0479">Metal-binding</keyword>
<keyword id="KW-0561">Oxygen transport</keyword>
<keyword id="KW-1185">Reference proteome</keyword>
<keyword id="KW-0813">Transport</keyword>
<organism>
    <name type="scientific">Mycobacterium tuberculosis (strain CDC 1551 / Oshkosh)</name>
    <dbReference type="NCBI Taxonomy" id="83331"/>
    <lineage>
        <taxon>Bacteria</taxon>
        <taxon>Bacillati</taxon>
        <taxon>Actinomycetota</taxon>
        <taxon>Actinomycetes</taxon>
        <taxon>Mycobacteriales</taxon>
        <taxon>Mycobacteriaceae</taxon>
        <taxon>Mycobacterium</taxon>
        <taxon>Mycobacterium tuberculosis complex</taxon>
    </lineage>
</organism>
<protein>
    <recommendedName>
        <fullName>Group 1 truncated hemoglobin GlbN</fullName>
        <shortName>Truncated hemoglobin</shortName>
        <shortName>trHbN</shortName>
    </recommendedName>
    <alternativeName>
        <fullName>Hemoglobin-like protein HbN</fullName>
    </alternativeName>
</protein>